<accession>O78750</accession>
<proteinExistence type="evidence at protein level"/>
<keyword id="KW-0002">3D-structure</keyword>
<keyword id="KW-0186">Copper</keyword>
<keyword id="KW-0249">Electron transport</keyword>
<keyword id="KW-0460">Magnesium</keyword>
<keyword id="KW-0472">Membrane</keyword>
<keyword id="KW-0479">Metal-binding</keyword>
<keyword id="KW-0496">Mitochondrion</keyword>
<keyword id="KW-0999">Mitochondrion inner membrane</keyword>
<keyword id="KW-0597">Phosphoprotein</keyword>
<keyword id="KW-1185">Reference proteome</keyword>
<keyword id="KW-0679">Respiratory chain</keyword>
<keyword id="KW-1278">Translocase</keyword>
<keyword id="KW-0812">Transmembrane</keyword>
<keyword id="KW-1133">Transmembrane helix</keyword>
<keyword id="KW-0813">Transport</keyword>
<protein>
    <recommendedName>
        <fullName>Cytochrome c oxidase subunit 2</fullName>
        <ecNumber>7.1.1.9</ecNumber>
    </recommendedName>
    <alternativeName>
        <fullName>Cytochrome c oxidase polypeptide II</fullName>
    </alternativeName>
</protein>
<gene>
    <name type="primary">MT-CO2</name>
    <name type="synonym">COII</name>
    <name type="synonym">COX2</name>
    <name type="synonym">COXII</name>
    <name type="synonym">MTCO2</name>
</gene>
<comment type="function">
    <text evidence="3">Component of the cytochrome c oxidase, the last enzyme in the mitochondrial electron transport chain which drives oxidative phosphorylation. The respiratory chain contains 3 multisubunit complexes succinate dehydrogenase (complex II, CII), ubiquinol-cytochrome c oxidoreductase (cytochrome b-c1 complex, complex III, CIII) and cytochrome c oxidase (complex IV, CIV), that cooperate to transfer electrons derived from NADH and succinate to molecular oxygen, creating an electrochemical gradient over the inner membrane that drives transmembrane transport and the ATP synthase. Cytochrome c oxidase is the component of the respiratory chain that catalyzes the reduction of oxygen to water. Electrons originating from reduced cytochrome c in the intermembrane space (IMS) are transferred via the dinuclear copper A center (CU(A)) of subunit 2 and heme A of subunit 1 to the active site in subunit 1, a binuclear center (BNC) formed by heme A3 and copper B (CU(B)). The BNC reduces molecular oxygen to 2 water molecules using 4 electrons from cytochrome c in the IMS and 4 protons from the mitochondrial matrix.</text>
</comment>
<comment type="catalytic activity">
    <reaction evidence="3">
        <text>4 Fe(II)-[cytochrome c] + O2 + 8 H(+)(in) = 4 Fe(III)-[cytochrome c] + 2 H2O + 4 H(+)(out)</text>
        <dbReference type="Rhea" id="RHEA:11436"/>
        <dbReference type="Rhea" id="RHEA-COMP:10350"/>
        <dbReference type="Rhea" id="RHEA-COMP:14399"/>
        <dbReference type="ChEBI" id="CHEBI:15377"/>
        <dbReference type="ChEBI" id="CHEBI:15378"/>
        <dbReference type="ChEBI" id="CHEBI:15379"/>
        <dbReference type="ChEBI" id="CHEBI:29033"/>
        <dbReference type="ChEBI" id="CHEBI:29034"/>
        <dbReference type="EC" id="7.1.1.9"/>
    </reaction>
    <physiologicalReaction direction="left-to-right" evidence="3">
        <dbReference type="Rhea" id="RHEA:11437"/>
    </physiologicalReaction>
</comment>
<comment type="cofactor">
    <cofactor evidence="4">
        <name>Cu cation</name>
        <dbReference type="ChEBI" id="CHEBI:23378"/>
    </cofactor>
    <text evidence="4">Binds a dinuclear copper A center per subunit.</text>
</comment>
<comment type="subunit">
    <text evidence="1 4 5">Component of the cytochrome c oxidase (complex IV, CIV), a multisubunit enzyme composed of 14 subunits. The complex is composed of a catalytic core of 3 subunits MT-CO1, MT-CO2 and MT-CO3, encoded in the mitochondrial DNA, and 11 supernumerary subunits COX4I, COX5A, COX5B, COX6A, COX6B, COX6C, COX7A, COX7B, COX7C, COX8 and NDUFA4, which are encoded in the nuclear genome (By similarity). The complex exists as a monomer or a dimer and forms supercomplexes (SCs) in the inner mitochondrial membrane with NADH-ubiquinone oxidoreductase (complex I, CI) and ubiquinol-cytochrome c oxidoreductase (cytochrome b-c1 complex, complex III, CIII), resulting in different assemblies (supercomplex SCI(1)III(2)IV(1) and megacomplex MCI(2)III(2)IV(2)) (PubMed:27654913). Found in a complex with TMEM177, COA6, COX18, COX20, SCO1 and SCO2. Interacts with TMEM177 in a COX20-dependent manner. Interacts with COX20. Interacts with COX16 (By similarity).</text>
</comment>
<comment type="subcellular location">
    <subcellularLocation>
        <location evidence="5">Mitochondrion inner membrane</location>
        <topology evidence="5">Multi-pass membrane protein</topology>
    </subcellularLocation>
</comment>
<comment type="similarity">
    <text evidence="6">Belongs to the cytochrome c oxidase subunit 2 family.</text>
</comment>
<geneLocation type="mitochondrion"/>
<sequence>MAYPMQLGFQDATSPIMEELLHFHDHTLMIVFLISSLVLYIISLMLTTKLTHTSTMDAQEVETIWTILPAIILIMIALPSLRILYMMDEINNPSLTVKTMGHQWYWSYEYTDYEDLSFDSYMIPTSELKPGELRLLEVDNRVVLPMEMTVRMLISSEDVLPSWAVPSLGLKTDAIPGRLNQTTLMSTRPGLFYGQCSEICGSNHSFMPIVLELVPLKYFEKWSASML</sequence>
<evidence type="ECO:0000250" key="1">
    <source>
        <dbReference type="UniProtKB" id="P00403"/>
    </source>
</evidence>
<evidence type="ECO:0000250" key="2">
    <source>
        <dbReference type="UniProtKB" id="P00406"/>
    </source>
</evidence>
<evidence type="ECO:0000250" key="3">
    <source>
        <dbReference type="UniProtKB" id="P00410"/>
    </source>
</evidence>
<evidence type="ECO:0000250" key="4">
    <source>
        <dbReference type="UniProtKB" id="P68530"/>
    </source>
</evidence>
<evidence type="ECO:0000269" key="5">
    <source>
    </source>
</evidence>
<evidence type="ECO:0000305" key="6"/>
<evidence type="ECO:0000312" key="7">
    <source>
        <dbReference type="Proteomes" id="UP000002356"/>
    </source>
</evidence>
<feature type="chain" id="PRO_0000183689" description="Cytochrome c oxidase subunit 2">
    <location>
        <begin position="1"/>
        <end position="227"/>
    </location>
</feature>
<feature type="topological domain" description="Mitochondrial intermembrane" evidence="5">
    <location>
        <begin position="1"/>
        <end position="14"/>
    </location>
</feature>
<feature type="transmembrane region" description="Helical; Name=I" evidence="4">
    <location>
        <begin position="15"/>
        <end position="45"/>
    </location>
</feature>
<feature type="topological domain" description="Mitochondrial matrix" evidence="5">
    <location>
        <begin position="46"/>
        <end position="59"/>
    </location>
</feature>
<feature type="transmembrane region" description="Helical; Name=II" evidence="4">
    <location>
        <begin position="60"/>
        <end position="87"/>
    </location>
</feature>
<feature type="topological domain" description="Mitochondrial intermembrane" evidence="5">
    <location>
        <begin position="88"/>
        <end position="227"/>
    </location>
</feature>
<feature type="binding site" evidence="5">
    <location>
        <position position="196"/>
    </location>
    <ligand>
        <name>Cu cation</name>
        <dbReference type="ChEBI" id="CHEBI:23378"/>
        <label>A1</label>
    </ligand>
</feature>
<feature type="binding site" evidence="5">
    <location>
        <position position="196"/>
    </location>
    <ligand>
        <name>Cu cation</name>
        <dbReference type="ChEBI" id="CHEBI:23378"/>
        <label>A2</label>
    </ligand>
</feature>
<feature type="binding site" evidence="5">
    <location>
        <position position="198"/>
    </location>
    <ligand>
        <name>Cu cation</name>
        <dbReference type="ChEBI" id="CHEBI:23378"/>
        <label>A2</label>
    </ligand>
</feature>
<feature type="binding site" evidence="4">
    <location>
        <position position="198"/>
    </location>
    <ligand>
        <name>Mg(2+)</name>
        <dbReference type="ChEBI" id="CHEBI:18420"/>
        <note>ligand shared with MT-CO1</note>
    </ligand>
</feature>
<feature type="binding site" evidence="5">
    <location>
        <position position="200"/>
    </location>
    <ligand>
        <name>Cu cation</name>
        <dbReference type="ChEBI" id="CHEBI:23378"/>
        <label>A1</label>
    </ligand>
</feature>
<feature type="binding site" evidence="5">
    <location>
        <position position="200"/>
    </location>
    <ligand>
        <name>Cu cation</name>
        <dbReference type="ChEBI" id="CHEBI:23378"/>
        <label>A2</label>
    </ligand>
</feature>
<feature type="binding site" evidence="5">
    <location>
        <position position="204"/>
    </location>
    <ligand>
        <name>Cu cation</name>
        <dbReference type="ChEBI" id="CHEBI:23378"/>
        <label>A2</label>
    </ligand>
</feature>
<feature type="binding site" evidence="5">
    <location>
        <position position="207"/>
    </location>
    <ligand>
        <name>Cu cation</name>
        <dbReference type="ChEBI" id="CHEBI:23378"/>
        <label>A1</label>
    </ligand>
</feature>
<feature type="modified residue" description="Phosphotyrosine" evidence="2">
    <location>
        <position position="218"/>
    </location>
</feature>
<reference key="1">
    <citation type="journal article" date="1998" name="J. Mol. Evol.">
        <title>The complete mitochondrial DNA sequence of the domestic sheep (Ovis aries) and comparison with the other major ovine haplotype.</title>
        <authorList>
            <person name="Hiendleder S."/>
            <person name="Lewalski H."/>
            <person name="Wassmuth R."/>
            <person name="Janke A."/>
        </authorList>
    </citation>
    <scope>NUCLEOTIDE SEQUENCE [LARGE SCALE GENOMIC DNA]</scope>
    <source>
        <strain evidence="7">Merinolandschaf</strain>
        <tissue>Liver</tissue>
    </source>
</reference>
<reference key="2">
    <citation type="journal article" date="2016" name="Nature">
        <title>The architecture of respiratory supercomplexes.</title>
        <authorList>
            <person name="Letts J.A."/>
            <person name="Fiedorczuk K."/>
            <person name="Sazanov L.A."/>
        </authorList>
    </citation>
    <scope>STRUCTURE BY ELECTRON MICROSCOPY (5.80 ANGSTROMS)</scope>
</reference>
<organism>
    <name type="scientific">Ovis aries</name>
    <name type="common">Sheep</name>
    <dbReference type="NCBI Taxonomy" id="9940"/>
    <lineage>
        <taxon>Eukaryota</taxon>
        <taxon>Metazoa</taxon>
        <taxon>Chordata</taxon>
        <taxon>Craniata</taxon>
        <taxon>Vertebrata</taxon>
        <taxon>Euteleostomi</taxon>
        <taxon>Mammalia</taxon>
        <taxon>Eutheria</taxon>
        <taxon>Laurasiatheria</taxon>
        <taxon>Artiodactyla</taxon>
        <taxon>Ruminantia</taxon>
        <taxon>Pecora</taxon>
        <taxon>Bovidae</taxon>
        <taxon>Caprinae</taxon>
        <taxon>Ovis</taxon>
    </lineage>
</organism>
<name>COX2_SHEEP</name>
<dbReference type="EC" id="7.1.1.9"/>
<dbReference type="EMBL" id="AF010406">
    <property type="protein sequence ID" value="AAD10099.1"/>
    <property type="molecule type" value="Genomic_DNA"/>
</dbReference>
<dbReference type="PIR" id="T11053">
    <property type="entry name" value="T11053"/>
</dbReference>
<dbReference type="RefSeq" id="NP_008409.1">
    <property type="nucleotide sequence ID" value="NC_001941.1"/>
</dbReference>
<dbReference type="PDB" id="5J4Z">
    <property type="method" value="EM"/>
    <property type="resolution" value="5.80 A"/>
    <property type="chains" value="BO=1-227"/>
</dbReference>
<dbReference type="PDB" id="5J7Y">
    <property type="method" value="EM"/>
    <property type="resolution" value="6.70 A"/>
    <property type="chains" value="BO=1-227"/>
</dbReference>
<dbReference type="PDBsum" id="5J4Z"/>
<dbReference type="PDBsum" id="5J7Y"/>
<dbReference type="EMDB" id="EMD-8128"/>
<dbReference type="SMR" id="O78750"/>
<dbReference type="STRING" id="9940.ENSOARP00000000004"/>
<dbReference type="BindingDB" id="O78750"/>
<dbReference type="ChEMBL" id="CHEMBL1250404"/>
<dbReference type="DrugCentral" id="O78750"/>
<dbReference type="PaxDb" id="9940-ENSOARP00000000004"/>
<dbReference type="Ensembl" id="ENSOART00025000020">
    <property type="protein sequence ID" value="ENSOARP00025000005"/>
    <property type="gene ID" value="ENSOARG00025000020"/>
</dbReference>
<dbReference type="Ensembl" id="ENSOART00040000020">
    <property type="protein sequence ID" value="ENSOARP00040000005"/>
    <property type="gene ID" value="ENSOARG00040000020"/>
</dbReference>
<dbReference type="Ensembl" id="ENSOART00180000020">
    <property type="protein sequence ID" value="ENSOARP00180000005"/>
    <property type="gene ID" value="ENSOARG00180000020"/>
</dbReference>
<dbReference type="Ensembl" id="ENSOART00185000020">
    <property type="protein sequence ID" value="ENSOARP00185000005"/>
    <property type="gene ID" value="ENSOARG00185000020"/>
</dbReference>
<dbReference type="Ensembl" id="ENSOART00215000020">
    <property type="protein sequence ID" value="ENSOARP00215000005"/>
    <property type="gene ID" value="ENSOARG00215000020"/>
</dbReference>
<dbReference type="Ensembl" id="ENSOART00220000020">
    <property type="protein sequence ID" value="ENSOARP00220000005"/>
    <property type="gene ID" value="ENSOARG00220000020"/>
</dbReference>
<dbReference type="Ensembl" id="ENSOART00225000020">
    <property type="protein sequence ID" value="ENSOARP00225000005"/>
    <property type="gene ID" value="ENSOARG00225000020"/>
</dbReference>
<dbReference type="Ensembl" id="ENSOART00260000020">
    <property type="protein sequence ID" value="ENSOARP00260000005"/>
    <property type="gene ID" value="ENSOARG00260000020"/>
</dbReference>
<dbReference type="GeneID" id="808252"/>
<dbReference type="KEGG" id="oas:808252"/>
<dbReference type="CTD" id="4513"/>
<dbReference type="eggNOG" id="KOG4767">
    <property type="taxonomic scope" value="Eukaryota"/>
</dbReference>
<dbReference type="HOGENOM" id="CLU_036876_2_3_1"/>
<dbReference type="OMA" id="WSYEYTD"/>
<dbReference type="OrthoDB" id="539285at2759"/>
<dbReference type="Proteomes" id="UP000002356">
    <property type="component" value="Mitochondrion"/>
</dbReference>
<dbReference type="Bgee" id="ENSOARG00000000019">
    <property type="expression patterns" value="Expressed in heart right ventricle and 56 other cell types or tissues"/>
</dbReference>
<dbReference type="ExpressionAtlas" id="O78750">
    <property type="expression patterns" value="baseline"/>
</dbReference>
<dbReference type="GO" id="GO:0005743">
    <property type="term" value="C:mitochondrial inner membrane"/>
    <property type="evidence" value="ECO:0007669"/>
    <property type="project" value="UniProtKB-SubCell"/>
</dbReference>
<dbReference type="GO" id="GO:0045277">
    <property type="term" value="C:respiratory chain complex IV"/>
    <property type="evidence" value="ECO:0000250"/>
    <property type="project" value="UniProtKB"/>
</dbReference>
<dbReference type="GO" id="GO:0005507">
    <property type="term" value="F:copper ion binding"/>
    <property type="evidence" value="ECO:0007669"/>
    <property type="project" value="InterPro"/>
</dbReference>
<dbReference type="GO" id="GO:0004129">
    <property type="term" value="F:cytochrome-c oxidase activity"/>
    <property type="evidence" value="ECO:0007669"/>
    <property type="project" value="UniProtKB-EC"/>
</dbReference>
<dbReference type="GO" id="GO:0042773">
    <property type="term" value="P:ATP synthesis coupled electron transport"/>
    <property type="evidence" value="ECO:0007669"/>
    <property type="project" value="TreeGrafter"/>
</dbReference>
<dbReference type="CDD" id="cd13912">
    <property type="entry name" value="CcO_II_C"/>
    <property type="match status" value="1"/>
</dbReference>
<dbReference type="FunFam" id="1.10.287.90:FF:000001">
    <property type="entry name" value="Cytochrome c oxidase subunit 2"/>
    <property type="match status" value="1"/>
</dbReference>
<dbReference type="FunFam" id="2.60.40.420:FF:000001">
    <property type="entry name" value="Cytochrome c oxidase subunit 2"/>
    <property type="match status" value="1"/>
</dbReference>
<dbReference type="Gene3D" id="1.10.287.90">
    <property type="match status" value="1"/>
</dbReference>
<dbReference type="Gene3D" id="2.60.40.420">
    <property type="entry name" value="Cupredoxins - blue copper proteins"/>
    <property type="match status" value="1"/>
</dbReference>
<dbReference type="InterPro" id="IPR045187">
    <property type="entry name" value="CcO_II"/>
</dbReference>
<dbReference type="InterPro" id="IPR002429">
    <property type="entry name" value="CcO_II-like_C"/>
</dbReference>
<dbReference type="InterPro" id="IPR034210">
    <property type="entry name" value="CcO_II_C"/>
</dbReference>
<dbReference type="InterPro" id="IPR008972">
    <property type="entry name" value="Cupredoxin"/>
</dbReference>
<dbReference type="InterPro" id="IPR014222">
    <property type="entry name" value="Cyt_c_oxidase_su2"/>
</dbReference>
<dbReference type="InterPro" id="IPR011759">
    <property type="entry name" value="Cyt_c_oxidase_su2_TM_dom"/>
</dbReference>
<dbReference type="InterPro" id="IPR036257">
    <property type="entry name" value="Cyt_c_oxidase_su2_TM_sf"/>
</dbReference>
<dbReference type="NCBIfam" id="TIGR02866">
    <property type="entry name" value="CoxB"/>
    <property type="match status" value="1"/>
</dbReference>
<dbReference type="PANTHER" id="PTHR22888:SF9">
    <property type="entry name" value="CYTOCHROME C OXIDASE SUBUNIT 2"/>
    <property type="match status" value="1"/>
</dbReference>
<dbReference type="PANTHER" id="PTHR22888">
    <property type="entry name" value="CYTOCHROME C OXIDASE, SUBUNIT II"/>
    <property type="match status" value="1"/>
</dbReference>
<dbReference type="Pfam" id="PF00116">
    <property type="entry name" value="COX2"/>
    <property type="match status" value="1"/>
</dbReference>
<dbReference type="Pfam" id="PF02790">
    <property type="entry name" value="COX2_TM"/>
    <property type="match status" value="1"/>
</dbReference>
<dbReference type="PRINTS" id="PR01166">
    <property type="entry name" value="CYCOXIDASEII"/>
</dbReference>
<dbReference type="SUPFAM" id="SSF49503">
    <property type="entry name" value="Cupredoxins"/>
    <property type="match status" value="1"/>
</dbReference>
<dbReference type="SUPFAM" id="SSF81464">
    <property type="entry name" value="Cytochrome c oxidase subunit II-like, transmembrane region"/>
    <property type="match status" value="1"/>
</dbReference>
<dbReference type="PROSITE" id="PS50857">
    <property type="entry name" value="COX2_CUA"/>
    <property type="match status" value="1"/>
</dbReference>
<dbReference type="PROSITE" id="PS50999">
    <property type="entry name" value="COX2_TM"/>
    <property type="match status" value="1"/>
</dbReference>